<comment type="function">
    <text evidence="1">Thiolesterase that catalyzes the hydrolysis of S-D-lactoyl-glutathione to form glutathione and D-lactic acid.</text>
</comment>
<comment type="catalytic activity">
    <reaction evidence="1">
        <text>an S-(2-hydroxyacyl)glutathione + H2O = a 2-hydroxy carboxylate + glutathione + H(+)</text>
        <dbReference type="Rhea" id="RHEA:21864"/>
        <dbReference type="ChEBI" id="CHEBI:15377"/>
        <dbReference type="ChEBI" id="CHEBI:15378"/>
        <dbReference type="ChEBI" id="CHEBI:57925"/>
        <dbReference type="ChEBI" id="CHEBI:58896"/>
        <dbReference type="ChEBI" id="CHEBI:71261"/>
        <dbReference type="EC" id="3.1.2.6"/>
    </reaction>
</comment>
<comment type="cofactor">
    <cofactor evidence="1">
        <name>Zn(2+)</name>
        <dbReference type="ChEBI" id="CHEBI:29105"/>
    </cofactor>
    <text evidence="1">Binds 2 Zn(2+) ions per subunit.</text>
</comment>
<comment type="pathway">
    <text evidence="1">Secondary metabolite metabolism; methylglyoxal degradation; (R)-lactate from methylglyoxal: step 2/2.</text>
</comment>
<comment type="subunit">
    <text evidence="1">Monomer.</text>
</comment>
<comment type="similarity">
    <text evidence="1">Belongs to the metallo-beta-lactamase superfamily. Glyoxalase II family.</text>
</comment>
<accession>Q48KX8</accession>
<proteinExistence type="inferred from homology"/>
<name>GLO2_PSE14</name>
<reference key="1">
    <citation type="journal article" date="2005" name="J. Bacteriol.">
        <title>Whole-genome sequence analysis of Pseudomonas syringae pv. phaseolicola 1448A reveals divergence among pathovars in genes involved in virulence and transposition.</title>
        <authorList>
            <person name="Joardar V."/>
            <person name="Lindeberg M."/>
            <person name="Jackson R.W."/>
            <person name="Selengut J."/>
            <person name="Dodson R."/>
            <person name="Brinkac L.M."/>
            <person name="Daugherty S.C."/>
            <person name="DeBoy R.T."/>
            <person name="Durkin A.S."/>
            <person name="Gwinn Giglio M."/>
            <person name="Madupu R."/>
            <person name="Nelson W.C."/>
            <person name="Rosovitz M.J."/>
            <person name="Sullivan S.A."/>
            <person name="Crabtree J."/>
            <person name="Creasy T."/>
            <person name="Davidsen T.M."/>
            <person name="Haft D.H."/>
            <person name="Zafar N."/>
            <person name="Zhou L."/>
            <person name="Halpin R."/>
            <person name="Holley T."/>
            <person name="Khouri H.M."/>
            <person name="Feldblyum T.V."/>
            <person name="White O."/>
            <person name="Fraser C.M."/>
            <person name="Chatterjee A.K."/>
            <person name="Cartinhour S."/>
            <person name="Schneider D."/>
            <person name="Mansfield J.W."/>
            <person name="Collmer A."/>
            <person name="Buell R."/>
        </authorList>
    </citation>
    <scope>NUCLEOTIDE SEQUENCE [LARGE SCALE GENOMIC DNA]</scope>
    <source>
        <strain>1448A / Race 6</strain>
    </source>
</reference>
<protein>
    <recommendedName>
        <fullName evidence="1">Hydroxyacylglutathione hydrolase</fullName>
        <ecNumber evidence="1">3.1.2.6</ecNumber>
    </recommendedName>
    <alternativeName>
        <fullName evidence="1">Glyoxalase II</fullName>
        <shortName evidence="1">Glx II</shortName>
    </alternativeName>
</protein>
<gene>
    <name evidence="1" type="primary">gloB</name>
    <name type="ordered locus">PSPPH_1710</name>
</gene>
<feature type="chain" id="PRO_1000144778" description="Hydroxyacylglutathione hydrolase">
    <location>
        <begin position="1"/>
        <end position="259"/>
    </location>
</feature>
<feature type="region of interest" description="Disordered" evidence="2">
    <location>
        <begin position="224"/>
        <end position="245"/>
    </location>
</feature>
<feature type="compositionally biased region" description="Basic and acidic residues" evidence="2">
    <location>
        <begin position="224"/>
        <end position="238"/>
    </location>
</feature>
<feature type="binding site" evidence="1">
    <location>
        <position position="56"/>
    </location>
    <ligand>
        <name>Zn(2+)</name>
        <dbReference type="ChEBI" id="CHEBI:29105"/>
        <label>1</label>
    </ligand>
</feature>
<feature type="binding site" evidence="1">
    <location>
        <position position="58"/>
    </location>
    <ligand>
        <name>Zn(2+)</name>
        <dbReference type="ChEBI" id="CHEBI:29105"/>
        <label>1</label>
    </ligand>
</feature>
<feature type="binding site" evidence="1">
    <location>
        <position position="60"/>
    </location>
    <ligand>
        <name>Zn(2+)</name>
        <dbReference type="ChEBI" id="CHEBI:29105"/>
        <label>2</label>
    </ligand>
</feature>
<feature type="binding site" evidence="1">
    <location>
        <position position="61"/>
    </location>
    <ligand>
        <name>Zn(2+)</name>
        <dbReference type="ChEBI" id="CHEBI:29105"/>
        <label>2</label>
    </ligand>
</feature>
<feature type="binding site" evidence="1">
    <location>
        <position position="112"/>
    </location>
    <ligand>
        <name>Zn(2+)</name>
        <dbReference type="ChEBI" id="CHEBI:29105"/>
        <label>1</label>
    </ligand>
</feature>
<feature type="binding site" evidence="1">
    <location>
        <position position="133"/>
    </location>
    <ligand>
        <name>Zn(2+)</name>
        <dbReference type="ChEBI" id="CHEBI:29105"/>
        <label>1</label>
    </ligand>
</feature>
<feature type="binding site" evidence="1">
    <location>
        <position position="133"/>
    </location>
    <ligand>
        <name>Zn(2+)</name>
        <dbReference type="ChEBI" id="CHEBI:29105"/>
        <label>2</label>
    </ligand>
</feature>
<feature type="binding site" evidence="1">
    <location>
        <position position="171"/>
    </location>
    <ligand>
        <name>Zn(2+)</name>
        <dbReference type="ChEBI" id="CHEBI:29105"/>
        <label>2</label>
    </ligand>
</feature>
<evidence type="ECO:0000255" key="1">
    <source>
        <dbReference type="HAMAP-Rule" id="MF_01374"/>
    </source>
</evidence>
<evidence type="ECO:0000256" key="2">
    <source>
        <dbReference type="SAM" id="MobiDB-lite"/>
    </source>
</evidence>
<keyword id="KW-0378">Hydrolase</keyword>
<keyword id="KW-0479">Metal-binding</keyword>
<keyword id="KW-0862">Zinc</keyword>
<dbReference type="EC" id="3.1.2.6" evidence="1"/>
<dbReference type="EMBL" id="CP000058">
    <property type="protein sequence ID" value="AAZ37802.1"/>
    <property type="molecule type" value="Genomic_DNA"/>
</dbReference>
<dbReference type="RefSeq" id="WP_004664360.1">
    <property type="nucleotide sequence ID" value="NC_005773.3"/>
</dbReference>
<dbReference type="SMR" id="Q48KX8"/>
<dbReference type="KEGG" id="psp:PSPPH_1710"/>
<dbReference type="eggNOG" id="COG0491">
    <property type="taxonomic scope" value="Bacteria"/>
</dbReference>
<dbReference type="HOGENOM" id="CLU_030571_4_1_6"/>
<dbReference type="UniPathway" id="UPA00619">
    <property type="reaction ID" value="UER00676"/>
</dbReference>
<dbReference type="Proteomes" id="UP000000551">
    <property type="component" value="Chromosome"/>
</dbReference>
<dbReference type="GO" id="GO:0004416">
    <property type="term" value="F:hydroxyacylglutathione hydrolase activity"/>
    <property type="evidence" value="ECO:0007669"/>
    <property type="project" value="UniProtKB-UniRule"/>
</dbReference>
<dbReference type="GO" id="GO:0046872">
    <property type="term" value="F:metal ion binding"/>
    <property type="evidence" value="ECO:0007669"/>
    <property type="project" value="UniProtKB-KW"/>
</dbReference>
<dbReference type="GO" id="GO:0019243">
    <property type="term" value="P:methylglyoxal catabolic process to D-lactate via S-lactoyl-glutathione"/>
    <property type="evidence" value="ECO:0007669"/>
    <property type="project" value="InterPro"/>
</dbReference>
<dbReference type="CDD" id="cd07723">
    <property type="entry name" value="hydroxyacylglutathione_hydrolase_MBL-fold"/>
    <property type="match status" value="1"/>
</dbReference>
<dbReference type="Gene3D" id="3.60.15.10">
    <property type="entry name" value="Ribonuclease Z/Hydroxyacylglutathione hydrolase-like"/>
    <property type="match status" value="1"/>
</dbReference>
<dbReference type="HAMAP" id="MF_01374">
    <property type="entry name" value="Glyoxalase_2"/>
    <property type="match status" value="1"/>
</dbReference>
<dbReference type="InterPro" id="IPR035680">
    <property type="entry name" value="Clx_II_MBL"/>
</dbReference>
<dbReference type="InterPro" id="IPR050110">
    <property type="entry name" value="Glyoxalase_II_hydrolase"/>
</dbReference>
<dbReference type="InterPro" id="IPR032282">
    <property type="entry name" value="HAGH_C"/>
</dbReference>
<dbReference type="InterPro" id="IPR017782">
    <property type="entry name" value="Hydroxyacylglutathione_Hdrlase"/>
</dbReference>
<dbReference type="InterPro" id="IPR001279">
    <property type="entry name" value="Metallo-B-lactamas"/>
</dbReference>
<dbReference type="InterPro" id="IPR036866">
    <property type="entry name" value="RibonucZ/Hydroxyglut_hydro"/>
</dbReference>
<dbReference type="NCBIfam" id="TIGR03413">
    <property type="entry name" value="GSH_gloB"/>
    <property type="match status" value="1"/>
</dbReference>
<dbReference type="PANTHER" id="PTHR43705">
    <property type="entry name" value="HYDROXYACYLGLUTATHIONE HYDROLASE"/>
    <property type="match status" value="1"/>
</dbReference>
<dbReference type="PANTHER" id="PTHR43705:SF1">
    <property type="entry name" value="HYDROXYACYLGLUTATHIONE HYDROLASE GLOB"/>
    <property type="match status" value="1"/>
</dbReference>
<dbReference type="Pfam" id="PF16123">
    <property type="entry name" value="HAGH_C"/>
    <property type="match status" value="1"/>
</dbReference>
<dbReference type="Pfam" id="PF00753">
    <property type="entry name" value="Lactamase_B"/>
    <property type="match status" value="1"/>
</dbReference>
<dbReference type="PIRSF" id="PIRSF005457">
    <property type="entry name" value="Glx"/>
    <property type="match status" value="1"/>
</dbReference>
<dbReference type="SMART" id="SM00849">
    <property type="entry name" value="Lactamase_B"/>
    <property type="match status" value="1"/>
</dbReference>
<dbReference type="SUPFAM" id="SSF56281">
    <property type="entry name" value="Metallo-hydrolase/oxidoreductase"/>
    <property type="match status" value="1"/>
</dbReference>
<sequence>MIQIHALPAFNDNYIWLLQDLSSQQCAVVDPGDAKPVLGWLTEHPDYRLTDILITHHHNDHVGGVAELKQATRARVLGPAAETIPARDVALVDHDRLTVLGLEFVVHAVPGHTLGHIAFYHEDATTPLLFSGDTLFAAGCGRLFEGTPEQMHDSLERLAKLPDSTLIYCAHEYTLSNLRFAQAVEPDNQDIAQRLAEVIRWRSENRISLPSNLALEKRTNPFLRTRETSVKEKADERSSGQNTSQSAVFASLRAWKDKF</sequence>
<organism>
    <name type="scientific">Pseudomonas savastanoi pv. phaseolicola (strain 1448A / Race 6)</name>
    <name type="common">Pseudomonas syringae pv. phaseolicola (strain 1448A / Race 6)</name>
    <dbReference type="NCBI Taxonomy" id="264730"/>
    <lineage>
        <taxon>Bacteria</taxon>
        <taxon>Pseudomonadati</taxon>
        <taxon>Pseudomonadota</taxon>
        <taxon>Gammaproteobacteria</taxon>
        <taxon>Pseudomonadales</taxon>
        <taxon>Pseudomonadaceae</taxon>
        <taxon>Pseudomonas</taxon>
    </lineage>
</organism>